<sequence length="122" mass="13982">HLLQFGDLINKIARRNGILYYGFYGCYCGLGGRGRPQDATDRCCFVHDCCYGKVTGCDPKNDIYTYSEENGAIVCGGDNPCKKEICECDRDAAICFRDNLDTYDNKYWFFPRKYCKEESEPC</sequence>
<dbReference type="EC" id="3.1.1.4" evidence="5"/>
<dbReference type="SMR" id="C0HMB2"/>
<dbReference type="GO" id="GO:0005576">
    <property type="term" value="C:extracellular region"/>
    <property type="evidence" value="ECO:0007669"/>
    <property type="project" value="UniProtKB-SubCell"/>
</dbReference>
<dbReference type="GO" id="GO:0005509">
    <property type="term" value="F:calcium ion binding"/>
    <property type="evidence" value="ECO:0007669"/>
    <property type="project" value="InterPro"/>
</dbReference>
<dbReference type="GO" id="GO:0047498">
    <property type="term" value="F:calcium-dependent phospholipase A2 activity"/>
    <property type="evidence" value="ECO:0007669"/>
    <property type="project" value="TreeGrafter"/>
</dbReference>
<dbReference type="GO" id="GO:0005543">
    <property type="term" value="F:phospholipid binding"/>
    <property type="evidence" value="ECO:0007669"/>
    <property type="project" value="TreeGrafter"/>
</dbReference>
<dbReference type="GO" id="GO:0050482">
    <property type="term" value="P:arachidonate secretion"/>
    <property type="evidence" value="ECO:0007669"/>
    <property type="project" value="InterPro"/>
</dbReference>
<dbReference type="GO" id="GO:0016042">
    <property type="term" value="P:lipid catabolic process"/>
    <property type="evidence" value="ECO:0007669"/>
    <property type="project" value="UniProtKB-KW"/>
</dbReference>
<dbReference type="GO" id="GO:0042130">
    <property type="term" value="P:negative regulation of T cell proliferation"/>
    <property type="evidence" value="ECO:0007669"/>
    <property type="project" value="TreeGrafter"/>
</dbReference>
<dbReference type="GO" id="GO:0006644">
    <property type="term" value="P:phospholipid metabolic process"/>
    <property type="evidence" value="ECO:0007669"/>
    <property type="project" value="InterPro"/>
</dbReference>
<dbReference type="CDD" id="cd00125">
    <property type="entry name" value="PLA2c"/>
    <property type="match status" value="1"/>
</dbReference>
<dbReference type="FunFam" id="1.20.90.10:FF:000001">
    <property type="entry name" value="Basic phospholipase A2 homolog"/>
    <property type="match status" value="1"/>
</dbReference>
<dbReference type="Gene3D" id="1.20.90.10">
    <property type="entry name" value="Phospholipase A2 domain"/>
    <property type="match status" value="1"/>
</dbReference>
<dbReference type="InterPro" id="IPR001211">
    <property type="entry name" value="PLipase_A2"/>
</dbReference>
<dbReference type="InterPro" id="IPR033112">
    <property type="entry name" value="PLipase_A2_Asp_AS"/>
</dbReference>
<dbReference type="InterPro" id="IPR016090">
    <property type="entry name" value="PLipase_A2_dom"/>
</dbReference>
<dbReference type="InterPro" id="IPR036444">
    <property type="entry name" value="PLipase_A2_dom_sf"/>
</dbReference>
<dbReference type="InterPro" id="IPR033113">
    <property type="entry name" value="PLipase_A2_His_AS"/>
</dbReference>
<dbReference type="PANTHER" id="PTHR11716">
    <property type="entry name" value="PHOSPHOLIPASE A2 FAMILY MEMBER"/>
    <property type="match status" value="1"/>
</dbReference>
<dbReference type="PANTHER" id="PTHR11716:SF9">
    <property type="entry name" value="PHOSPHOLIPASE A2, MEMBRANE ASSOCIATED"/>
    <property type="match status" value="1"/>
</dbReference>
<dbReference type="Pfam" id="PF00068">
    <property type="entry name" value="Phospholip_A2_1"/>
    <property type="match status" value="1"/>
</dbReference>
<dbReference type="PRINTS" id="PR00389">
    <property type="entry name" value="PHPHLIPASEA2"/>
</dbReference>
<dbReference type="SMART" id="SM00085">
    <property type="entry name" value="PA2c"/>
    <property type="match status" value="1"/>
</dbReference>
<dbReference type="SUPFAM" id="SSF48619">
    <property type="entry name" value="Phospholipase A2, PLA2"/>
    <property type="match status" value="1"/>
</dbReference>
<dbReference type="PROSITE" id="PS00119">
    <property type="entry name" value="PA2_ASP"/>
    <property type="match status" value="1"/>
</dbReference>
<dbReference type="PROSITE" id="PS00118">
    <property type="entry name" value="PA2_HIS"/>
    <property type="match status" value="1"/>
</dbReference>
<organism>
    <name type="scientific">Lachesis acrochorda</name>
    <name type="common">Chocoan bushmaster</name>
    <name type="synonym">Bothrops acrochordus</name>
    <dbReference type="NCBI Taxonomy" id="1170830"/>
    <lineage>
        <taxon>Eukaryota</taxon>
        <taxon>Metazoa</taxon>
        <taxon>Chordata</taxon>
        <taxon>Craniata</taxon>
        <taxon>Vertebrata</taxon>
        <taxon>Euteleostomi</taxon>
        <taxon>Lepidosauria</taxon>
        <taxon>Squamata</taxon>
        <taxon>Bifurcata</taxon>
        <taxon>Unidentata</taxon>
        <taxon>Episquamata</taxon>
        <taxon>Toxicofera</taxon>
        <taxon>Serpentes</taxon>
        <taxon>Colubroidea</taxon>
        <taxon>Viperidae</taxon>
        <taxon>Crotalinae</taxon>
        <taxon>Lachesis</taxon>
    </lineage>
</organism>
<protein>
    <recommendedName>
        <fullName evidence="6">Acidic phospholipase A2</fullName>
        <shortName evidence="6">PLA2</shortName>
        <ecNumber evidence="5">3.1.1.4</ecNumber>
    </recommendedName>
    <alternativeName>
        <fullName evidence="3">Phosphatidylcholine 2-acylhydrolase</fullName>
    </alternativeName>
</protein>
<accession>C0HMB2</accession>
<name>PA2A_LACAO</name>
<evidence type="ECO:0000250" key="1">
    <source>
        <dbReference type="UniProtKB" id="O42187"/>
    </source>
</evidence>
<evidence type="ECO:0000250" key="2">
    <source>
        <dbReference type="UniProtKB" id="O42191"/>
    </source>
</evidence>
<evidence type="ECO:0000250" key="3">
    <source>
        <dbReference type="UniProtKB" id="P00624"/>
    </source>
</evidence>
<evidence type="ECO:0000250" key="4">
    <source>
        <dbReference type="UniProtKB" id="P06859"/>
    </source>
</evidence>
<evidence type="ECO:0000269" key="5">
    <source>
    </source>
</evidence>
<evidence type="ECO:0000303" key="6">
    <source>
    </source>
</evidence>
<evidence type="ECO:0000305" key="7"/>
<evidence type="ECO:0000305" key="8">
    <source>
    </source>
</evidence>
<comment type="function">
    <text evidence="5">PLA2 catalyzes the calcium-dependent hydrolysis of the 2-acyl groups in 3-sn-phosphoglycerides (PubMed:38013057). In vivo, is non-lethal to mice when intravenously injected up to a concentration of 30 ug, however does show significant edematogenic activity at the injection site (PubMed:38013057).</text>
</comment>
<comment type="catalytic activity">
    <reaction evidence="5">
        <text>a 1,2-diacyl-sn-glycero-3-phosphocholine + H2O = a 1-acyl-sn-glycero-3-phosphocholine + a fatty acid + H(+)</text>
        <dbReference type="Rhea" id="RHEA:15801"/>
        <dbReference type="ChEBI" id="CHEBI:15377"/>
        <dbReference type="ChEBI" id="CHEBI:15378"/>
        <dbReference type="ChEBI" id="CHEBI:28868"/>
        <dbReference type="ChEBI" id="CHEBI:57643"/>
        <dbReference type="ChEBI" id="CHEBI:58168"/>
        <dbReference type="EC" id="3.1.1.4"/>
    </reaction>
</comment>
<comment type="cofactor">
    <cofactor evidence="5">
        <name>Ca(2+)</name>
        <dbReference type="ChEBI" id="CHEBI:29108"/>
    </cofactor>
</comment>
<comment type="subunit">
    <text evidence="5">May form tetramers.</text>
</comment>
<comment type="subcellular location">
    <subcellularLocation>
        <location evidence="5">Secreted</location>
    </subcellularLocation>
</comment>
<comment type="tissue specificity">
    <text evidence="8">Expressed by the venom gland.</text>
</comment>
<comment type="mass spectrometry" mass="13969.7" method="MALDI" evidence="5"/>
<comment type="similarity">
    <text evidence="7">Belongs to the phospholipase A2 family. Group II subfamily. D49 sub-subfamily.</text>
</comment>
<feature type="chain" id="PRO_0000460361" description="Acidic phospholipase A2">
    <location>
        <begin position="1"/>
        <end position="122"/>
    </location>
</feature>
<feature type="active site" evidence="4">
    <location>
        <position position="47"/>
    </location>
</feature>
<feature type="active site" evidence="4">
    <location>
        <position position="89"/>
    </location>
</feature>
<feature type="binding site" evidence="2">
    <location>
        <position position="27"/>
    </location>
    <ligand>
        <name>Ca(2+)</name>
        <dbReference type="ChEBI" id="CHEBI:29108"/>
    </ligand>
</feature>
<feature type="binding site" evidence="2">
    <location>
        <position position="29"/>
    </location>
    <ligand>
        <name>Ca(2+)</name>
        <dbReference type="ChEBI" id="CHEBI:29108"/>
    </ligand>
</feature>
<feature type="binding site" evidence="2">
    <location>
        <position position="31"/>
    </location>
    <ligand>
        <name>Ca(2+)</name>
        <dbReference type="ChEBI" id="CHEBI:29108"/>
    </ligand>
</feature>
<feature type="binding site" evidence="2">
    <location>
        <position position="48"/>
    </location>
    <ligand>
        <name>Ca(2+)</name>
        <dbReference type="ChEBI" id="CHEBI:29108"/>
    </ligand>
</feature>
<feature type="disulfide bond" evidence="1">
    <location>
        <begin position="26"/>
        <end position="115"/>
    </location>
</feature>
<feature type="disulfide bond" evidence="1">
    <location>
        <begin position="28"/>
        <end position="44"/>
    </location>
</feature>
<feature type="disulfide bond" evidence="1">
    <location>
        <begin position="43"/>
        <end position="95"/>
    </location>
</feature>
<feature type="disulfide bond" evidence="1">
    <location>
        <begin position="49"/>
        <end position="122"/>
    </location>
</feature>
<feature type="disulfide bond" evidence="1">
    <location>
        <begin position="50"/>
        <end position="88"/>
    </location>
</feature>
<feature type="disulfide bond" evidence="1">
    <location>
        <begin position="57"/>
        <end position="81"/>
    </location>
</feature>
<feature type="disulfide bond" evidence="1">
    <location>
        <begin position="75"/>
        <end position="86"/>
    </location>
</feature>
<proteinExistence type="evidence at protein level"/>
<reference key="1">
    <citation type="journal article" date="2024" name="Toxicon">
        <title>Structural, biochemical and immunochemical characterization of an acidic phospholipase A2 from Lachesis acrochorda (Viperidae: Crotalinae) venom.</title>
        <authorList>
            <person name="Franco-Vasquez A.M."/>
            <person name="Lazcano-Perez F."/>
            <person name="Mejia-Sanchez M.A."/>
            <person name="Corzo G."/>
            <person name="Zamudio F."/>
            <person name="Carbajal-Saucedo A."/>
            <person name="Roman-Gonzalez S.A."/>
            <person name="Gomez-Manzo S."/>
            <person name="Arreguin-Espinosa R."/>
        </authorList>
    </citation>
    <scope>PROTEIN SEQUENCE</scope>
    <scope>IDENTIFICATION BY MASS SPECTROMETRY</scope>
    <scope>FUNCTION</scope>
    <scope>CATALYTIC ACTIVITY</scope>
    <scope>COFACTOR</scope>
    <scope>SUBUNIT</scope>
    <scope>SUBCELLULAR LOCATION</scope>
    <scope>TISSUE SPECIFICITY</scope>
    <scope>MASS SPECTROMETRY</scope>
    <scope>ACTIVE SITE</scope>
    <source>
        <tissue>Venom</tissue>
    </source>
</reference>
<keyword id="KW-0106">Calcium</keyword>
<keyword id="KW-0903">Direct protein sequencing</keyword>
<keyword id="KW-1015">Disulfide bond</keyword>
<keyword id="KW-0378">Hydrolase</keyword>
<keyword id="KW-0442">Lipid degradation</keyword>
<keyword id="KW-0443">Lipid metabolism</keyword>
<keyword id="KW-0479">Metal-binding</keyword>
<keyword id="KW-0964">Secreted</keyword>